<dbReference type="EMBL" id="AB089503">
    <property type="protein sequence ID" value="BAC07315.1"/>
    <property type="molecule type" value="Genomic_DNA"/>
</dbReference>
<dbReference type="RefSeq" id="XP_009473874.1">
    <property type="nucleotide sequence ID" value="XM_009475599.1"/>
</dbReference>
<dbReference type="SMR" id="Q8JIE9"/>
<dbReference type="GlyCosmos" id="Q8JIE9">
    <property type="glycosylation" value="2 sites, No reported glycans"/>
</dbReference>
<dbReference type="GeneID" id="104021959"/>
<dbReference type="KEGG" id="nni:104021959"/>
<dbReference type="CTD" id="1081"/>
<dbReference type="eggNOG" id="ENOG502S1PK">
    <property type="taxonomic scope" value="Eukaryota"/>
</dbReference>
<dbReference type="OrthoDB" id="9852859at2759"/>
<dbReference type="GO" id="GO:0005615">
    <property type="term" value="C:extracellular space"/>
    <property type="evidence" value="ECO:0000250"/>
    <property type="project" value="UniProtKB"/>
</dbReference>
<dbReference type="GO" id="GO:0016914">
    <property type="term" value="C:follicle-stimulating hormone complex"/>
    <property type="evidence" value="ECO:0000250"/>
    <property type="project" value="UniProtKB"/>
</dbReference>
<dbReference type="GO" id="GO:0016913">
    <property type="term" value="F:follicle-stimulating hormone activity"/>
    <property type="evidence" value="ECO:0000250"/>
    <property type="project" value="UniProtKB"/>
</dbReference>
<dbReference type="GO" id="GO:0007186">
    <property type="term" value="P:G protein-coupled receptor signaling pathway"/>
    <property type="evidence" value="ECO:0000250"/>
    <property type="project" value="UniProtKB"/>
</dbReference>
<dbReference type="GO" id="GO:0010893">
    <property type="term" value="P:positive regulation of steroid biosynthetic process"/>
    <property type="evidence" value="ECO:0000250"/>
    <property type="project" value="UniProtKB"/>
</dbReference>
<dbReference type="GO" id="GO:0010469">
    <property type="term" value="P:regulation of signaling receptor activity"/>
    <property type="evidence" value="ECO:0000250"/>
    <property type="project" value="UniProtKB"/>
</dbReference>
<dbReference type="GO" id="GO:0006590">
    <property type="term" value="P:thyroid hormone generation"/>
    <property type="evidence" value="ECO:0007669"/>
    <property type="project" value="TreeGrafter"/>
</dbReference>
<dbReference type="FunFam" id="2.10.90.10:FF:000011">
    <property type="entry name" value="Glycoprotein hormones alpha chain"/>
    <property type="match status" value="1"/>
</dbReference>
<dbReference type="Gene3D" id="2.10.90.10">
    <property type="entry name" value="Cystine-knot cytokines"/>
    <property type="match status" value="1"/>
</dbReference>
<dbReference type="InterPro" id="IPR029034">
    <property type="entry name" value="Cystine-knot_cytokine"/>
</dbReference>
<dbReference type="InterPro" id="IPR000476">
    <property type="entry name" value="Glyco_hormone"/>
</dbReference>
<dbReference type="PANTHER" id="PTHR11509">
    <property type="entry name" value="GLYCOPROTEIN HORMONE ALPHA CHAIN"/>
    <property type="match status" value="1"/>
</dbReference>
<dbReference type="PANTHER" id="PTHR11509:SF0">
    <property type="entry name" value="GLYCOPROTEIN HORMONES ALPHA CHAIN"/>
    <property type="match status" value="1"/>
</dbReference>
<dbReference type="Pfam" id="PF00236">
    <property type="entry name" value="Hormone_6"/>
    <property type="match status" value="1"/>
</dbReference>
<dbReference type="PRINTS" id="PR00274">
    <property type="entry name" value="GLYCOHORMONE"/>
</dbReference>
<dbReference type="SMART" id="SM00067">
    <property type="entry name" value="GHA"/>
    <property type="match status" value="1"/>
</dbReference>
<dbReference type="SUPFAM" id="SSF57501">
    <property type="entry name" value="Cystine-knot cytokines"/>
    <property type="match status" value="1"/>
</dbReference>
<dbReference type="PROSITE" id="PS00779">
    <property type="entry name" value="GLYCO_HORMONE_ALPHA_1"/>
    <property type="match status" value="1"/>
</dbReference>
<dbReference type="PROSITE" id="PS00780">
    <property type="entry name" value="GLYCO_HORMONE_ALPHA_2"/>
    <property type="match status" value="1"/>
</dbReference>
<dbReference type="PROSITE" id="PS50277">
    <property type="entry name" value="GLYCO_HORMONE_ALPHA_3"/>
    <property type="match status" value="1"/>
</dbReference>
<accession>Q8JIE9</accession>
<comment type="function">
    <text evidence="1">Shared alpha chain of heterodimeric glycoprotein hormones. These hormones bind specific receptors on target cells that in turn activate downstream signaling pathways.</text>
</comment>
<comment type="subunit">
    <text evidence="1">Heterodimer. Glycoprotein hormones are heterodimers composed of a common alpha chain described here and a unique beta chain which confers their biological specificity to the different hormones.</text>
</comment>
<comment type="subcellular location">
    <subcellularLocation>
        <location evidence="1">Secreted</location>
    </subcellularLocation>
</comment>
<comment type="similarity">
    <text evidence="3">Belongs to the glycoprotein hormones subunit alpha family.</text>
</comment>
<name>GLHA_NIPNI</name>
<feature type="signal peptide" evidence="2">
    <location>
        <begin position="1"/>
        <end position="24"/>
    </location>
</feature>
<feature type="chain" id="PRO_0000042880" description="Glycoprotein hormones alpha chain">
    <location>
        <begin position="25"/>
        <end position="120"/>
    </location>
</feature>
<feature type="glycosylation site" description="N-linked (GlcNAc...) asparagine" evidence="1">
    <location>
        <position position="80"/>
    </location>
</feature>
<feature type="glycosylation site" description="N-linked (GlcNAc...) asparagine" evidence="1">
    <location>
        <position position="106"/>
    </location>
</feature>
<feature type="disulfide bond" evidence="1">
    <location>
        <begin position="35"/>
        <end position="59"/>
    </location>
</feature>
<feature type="disulfide bond" evidence="1">
    <location>
        <begin position="38"/>
        <end position="88"/>
    </location>
</feature>
<feature type="disulfide bond" evidence="1">
    <location>
        <begin position="56"/>
        <end position="110"/>
    </location>
</feature>
<feature type="disulfide bond" evidence="1">
    <location>
        <begin position="60"/>
        <end position="112"/>
    </location>
</feature>
<feature type="disulfide bond" evidence="1">
    <location>
        <begin position="87"/>
        <end position="115"/>
    </location>
</feature>
<gene>
    <name type="primary">CGA</name>
</gene>
<protein>
    <recommendedName>
        <fullName>Glycoprotein hormones alpha chain</fullName>
    </recommendedName>
    <alternativeName>
        <fullName>Anterior pituitary glycoprotein hormones common subunit alpha</fullName>
    </alternativeName>
    <alternativeName>
        <fullName>Follicle-stimulating hormone alpha chain</fullName>
        <shortName>FSH-alpha</shortName>
    </alternativeName>
    <alternativeName>
        <fullName>Follitropin alpha chain</fullName>
    </alternativeName>
    <alternativeName>
        <fullName>Luteinizing hormone alpha chain</fullName>
        <shortName>LSH-alpha</shortName>
    </alternativeName>
    <alternativeName>
        <fullName>Lutropin alpha chain</fullName>
    </alternativeName>
    <alternativeName>
        <fullName>Thyroid-stimulating hormone alpha chain</fullName>
        <shortName>TSH-alpha</shortName>
    </alternativeName>
    <alternativeName>
        <fullName>Thyrotropin alpha chain</fullName>
    </alternativeName>
</protein>
<evidence type="ECO:0000250" key="1">
    <source>
        <dbReference type="UniProtKB" id="P01215"/>
    </source>
</evidence>
<evidence type="ECO:0000255" key="2"/>
<evidence type="ECO:0000305" key="3"/>
<organism>
    <name type="scientific">Nipponia nippon</name>
    <name type="common">Crested ibis</name>
    <name type="synonym">Ibis nippon</name>
    <dbReference type="NCBI Taxonomy" id="128390"/>
    <lineage>
        <taxon>Eukaryota</taxon>
        <taxon>Metazoa</taxon>
        <taxon>Chordata</taxon>
        <taxon>Craniata</taxon>
        <taxon>Vertebrata</taxon>
        <taxon>Euteleostomi</taxon>
        <taxon>Archelosauria</taxon>
        <taxon>Archosauria</taxon>
        <taxon>Dinosauria</taxon>
        <taxon>Saurischia</taxon>
        <taxon>Theropoda</taxon>
        <taxon>Coelurosauria</taxon>
        <taxon>Aves</taxon>
        <taxon>Neognathae</taxon>
        <taxon>Neoaves</taxon>
        <taxon>Aequornithes</taxon>
        <taxon>Pelecaniformes</taxon>
        <taxon>Threskiornithidae</taxon>
        <taxon>Nipponia</taxon>
    </lineage>
</organism>
<proteinExistence type="inferred from homology"/>
<reference key="1">
    <citation type="submission" date="2002-08" db="EMBL/GenBank/DDBJ databases">
        <title>Cloning of the genes for the pituitary glycoprotein hormone alpha subunit and follicle-stimulating hormone beta subunit in the Japanese crested ibis, Nipponia nippon.</title>
        <authorList>
            <person name="Kawasaki D."/>
            <person name="Kanai M."/>
            <person name="Aotsuka T."/>
            <person name="Ishii S."/>
        </authorList>
    </citation>
    <scope>NUCLEOTIDE SEQUENCE [GENOMIC DNA]</scope>
</reference>
<keyword id="KW-1015">Disulfide bond</keyword>
<keyword id="KW-0325">Glycoprotein</keyword>
<keyword id="KW-0372">Hormone</keyword>
<keyword id="KW-0964">Secreted</keyword>
<keyword id="KW-0732">Signal</keyword>
<sequence>MGCYGKYAAVTLTILSVFLHLLHAFPDGEFLMQGCPECKLGENRFFSKPGAPIYQCTGCCFSRAYPTPMRSKKTMLVPKNITSEATCCVAKAFTKITLKDNVKIENHTDCHCSTCYYHKS</sequence>